<evidence type="ECO:0000250" key="1">
    <source>
        <dbReference type="UniProtKB" id="Q8WXC6"/>
    </source>
</evidence>
<evidence type="ECO:0000256" key="2">
    <source>
        <dbReference type="SAM" id="MobiDB-lite"/>
    </source>
</evidence>
<evidence type="ECO:0000305" key="3"/>
<keyword id="KW-1185">Reference proteome</keyword>
<keyword id="KW-0736">Signalosome</keyword>
<comment type="function">
    <text evidence="1">Component of the COP9 signalosome complex (CSN), a complex involved in various cellular and developmental processes. The CSN complex is an essential regulator of the ubiquitin (Ubl) conjugation pathway by mediating the deneddylation of the cullin subunits of SCF-type E3 ligase complexes, leading to decrease the Ubl ligase activity.</text>
</comment>
<comment type="subunit">
    <text evidence="1">Probable component of the COP9 signalosome (CSN) complex.</text>
</comment>
<comment type="similarity">
    <text evidence="3">Belongs to the CSN9 family.</text>
</comment>
<comment type="sequence caution" evidence="3">
    <conflict type="erroneous initiation">
        <sequence resource="EMBL-CDS" id="AAF58405"/>
    </conflict>
</comment>
<comment type="sequence caution" evidence="3">
    <conflict type="erroneous initiation">
        <sequence resource="EMBL-CDS" id="AAM50596"/>
    </conflict>
</comment>
<feature type="chain" id="PRO_0000332929" description="COP9 signalosome complex subunit 9 homolog">
    <location>
        <begin position="1"/>
        <end position="67"/>
    </location>
</feature>
<feature type="region of interest" description="Disordered" evidence="2">
    <location>
        <begin position="1"/>
        <end position="31"/>
    </location>
</feature>
<organism>
    <name type="scientific">Drosophila melanogaster</name>
    <name type="common">Fruit fly</name>
    <dbReference type="NCBI Taxonomy" id="7227"/>
    <lineage>
        <taxon>Eukaryota</taxon>
        <taxon>Metazoa</taxon>
        <taxon>Ecdysozoa</taxon>
        <taxon>Arthropoda</taxon>
        <taxon>Hexapoda</taxon>
        <taxon>Insecta</taxon>
        <taxon>Pterygota</taxon>
        <taxon>Neoptera</taxon>
        <taxon>Endopterygota</taxon>
        <taxon>Diptera</taxon>
        <taxon>Brachycera</taxon>
        <taxon>Muscomorpha</taxon>
        <taxon>Ephydroidea</taxon>
        <taxon>Drosophilidae</taxon>
        <taxon>Drosophila</taxon>
        <taxon>Sophophora</taxon>
    </lineage>
</organism>
<reference key="1">
    <citation type="journal article" date="2000" name="Science">
        <title>The genome sequence of Drosophila melanogaster.</title>
        <authorList>
            <person name="Adams M.D."/>
            <person name="Celniker S.E."/>
            <person name="Holt R.A."/>
            <person name="Evans C.A."/>
            <person name="Gocayne J.D."/>
            <person name="Amanatides P.G."/>
            <person name="Scherer S.E."/>
            <person name="Li P.W."/>
            <person name="Hoskins R.A."/>
            <person name="Galle R.F."/>
            <person name="George R.A."/>
            <person name="Lewis S.E."/>
            <person name="Richards S."/>
            <person name="Ashburner M."/>
            <person name="Henderson S.N."/>
            <person name="Sutton G.G."/>
            <person name="Wortman J.R."/>
            <person name="Yandell M.D."/>
            <person name="Zhang Q."/>
            <person name="Chen L.X."/>
            <person name="Brandon R.C."/>
            <person name="Rogers Y.-H.C."/>
            <person name="Blazej R.G."/>
            <person name="Champe M."/>
            <person name="Pfeiffer B.D."/>
            <person name="Wan K.H."/>
            <person name="Doyle C."/>
            <person name="Baxter E.G."/>
            <person name="Helt G."/>
            <person name="Nelson C.R."/>
            <person name="Miklos G.L.G."/>
            <person name="Abril J.F."/>
            <person name="Agbayani A."/>
            <person name="An H.-J."/>
            <person name="Andrews-Pfannkoch C."/>
            <person name="Baldwin D."/>
            <person name="Ballew R.M."/>
            <person name="Basu A."/>
            <person name="Baxendale J."/>
            <person name="Bayraktaroglu L."/>
            <person name="Beasley E.M."/>
            <person name="Beeson K.Y."/>
            <person name="Benos P.V."/>
            <person name="Berman B.P."/>
            <person name="Bhandari D."/>
            <person name="Bolshakov S."/>
            <person name="Borkova D."/>
            <person name="Botchan M.R."/>
            <person name="Bouck J."/>
            <person name="Brokstein P."/>
            <person name="Brottier P."/>
            <person name="Burtis K.C."/>
            <person name="Busam D.A."/>
            <person name="Butler H."/>
            <person name="Cadieu E."/>
            <person name="Center A."/>
            <person name="Chandra I."/>
            <person name="Cherry J.M."/>
            <person name="Cawley S."/>
            <person name="Dahlke C."/>
            <person name="Davenport L.B."/>
            <person name="Davies P."/>
            <person name="de Pablos B."/>
            <person name="Delcher A."/>
            <person name="Deng Z."/>
            <person name="Mays A.D."/>
            <person name="Dew I."/>
            <person name="Dietz S.M."/>
            <person name="Dodson K."/>
            <person name="Doup L.E."/>
            <person name="Downes M."/>
            <person name="Dugan-Rocha S."/>
            <person name="Dunkov B.C."/>
            <person name="Dunn P."/>
            <person name="Durbin K.J."/>
            <person name="Evangelista C.C."/>
            <person name="Ferraz C."/>
            <person name="Ferriera S."/>
            <person name="Fleischmann W."/>
            <person name="Fosler C."/>
            <person name="Gabrielian A.E."/>
            <person name="Garg N.S."/>
            <person name="Gelbart W.M."/>
            <person name="Glasser K."/>
            <person name="Glodek A."/>
            <person name="Gong F."/>
            <person name="Gorrell J.H."/>
            <person name="Gu Z."/>
            <person name="Guan P."/>
            <person name="Harris M."/>
            <person name="Harris N.L."/>
            <person name="Harvey D.A."/>
            <person name="Heiman T.J."/>
            <person name="Hernandez J.R."/>
            <person name="Houck J."/>
            <person name="Hostin D."/>
            <person name="Houston K.A."/>
            <person name="Howland T.J."/>
            <person name="Wei M.-H."/>
            <person name="Ibegwam C."/>
            <person name="Jalali M."/>
            <person name="Kalush F."/>
            <person name="Karpen G.H."/>
            <person name="Ke Z."/>
            <person name="Kennison J.A."/>
            <person name="Ketchum K.A."/>
            <person name="Kimmel B.E."/>
            <person name="Kodira C.D."/>
            <person name="Kraft C.L."/>
            <person name="Kravitz S."/>
            <person name="Kulp D."/>
            <person name="Lai Z."/>
            <person name="Lasko P."/>
            <person name="Lei Y."/>
            <person name="Levitsky A.A."/>
            <person name="Li J.H."/>
            <person name="Li Z."/>
            <person name="Liang Y."/>
            <person name="Lin X."/>
            <person name="Liu X."/>
            <person name="Mattei B."/>
            <person name="McIntosh T.C."/>
            <person name="McLeod M.P."/>
            <person name="McPherson D."/>
            <person name="Merkulov G."/>
            <person name="Milshina N.V."/>
            <person name="Mobarry C."/>
            <person name="Morris J."/>
            <person name="Moshrefi A."/>
            <person name="Mount S.M."/>
            <person name="Moy M."/>
            <person name="Murphy B."/>
            <person name="Murphy L."/>
            <person name="Muzny D.M."/>
            <person name="Nelson D.L."/>
            <person name="Nelson D.R."/>
            <person name="Nelson K.A."/>
            <person name="Nixon K."/>
            <person name="Nusskern D.R."/>
            <person name="Pacleb J.M."/>
            <person name="Palazzolo M."/>
            <person name="Pittman G.S."/>
            <person name="Pan S."/>
            <person name="Pollard J."/>
            <person name="Puri V."/>
            <person name="Reese M.G."/>
            <person name="Reinert K."/>
            <person name="Remington K."/>
            <person name="Saunders R.D.C."/>
            <person name="Scheeler F."/>
            <person name="Shen H."/>
            <person name="Shue B.C."/>
            <person name="Siden-Kiamos I."/>
            <person name="Simpson M."/>
            <person name="Skupski M.P."/>
            <person name="Smith T.J."/>
            <person name="Spier E."/>
            <person name="Spradling A.C."/>
            <person name="Stapleton M."/>
            <person name="Strong R."/>
            <person name="Sun E."/>
            <person name="Svirskas R."/>
            <person name="Tector C."/>
            <person name="Turner R."/>
            <person name="Venter E."/>
            <person name="Wang A.H."/>
            <person name="Wang X."/>
            <person name="Wang Z.-Y."/>
            <person name="Wassarman D.A."/>
            <person name="Weinstock G.M."/>
            <person name="Weissenbach J."/>
            <person name="Williams S.M."/>
            <person name="Woodage T."/>
            <person name="Worley K.C."/>
            <person name="Wu D."/>
            <person name="Yang S."/>
            <person name="Yao Q.A."/>
            <person name="Ye J."/>
            <person name="Yeh R.-F."/>
            <person name="Zaveri J.S."/>
            <person name="Zhan M."/>
            <person name="Zhang G."/>
            <person name="Zhao Q."/>
            <person name="Zheng L."/>
            <person name="Zheng X.H."/>
            <person name="Zhong F.N."/>
            <person name="Zhong W."/>
            <person name="Zhou X."/>
            <person name="Zhu S.C."/>
            <person name="Zhu X."/>
            <person name="Smith H.O."/>
            <person name="Gibbs R.A."/>
            <person name="Myers E.W."/>
            <person name="Rubin G.M."/>
            <person name="Venter J.C."/>
        </authorList>
    </citation>
    <scope>NUCLEOTIDE SEQUENCE [LARGE SCALE GENOMIC DNA]</scope>
    <source>
        <strain>Berkeley</strain>
    </source>
</reference>
<reference key="2">
    <citation type="journal article" date="2002" name="Genome Biol.">
        <title>Annotation of the Drosophila melanogaster euchromatic genome: a systematic review.</title>
        <authorList>
            <person name="Misra S."/>
            <person name="Crosby M.A."/>
            <person name="Mungall C.J."/>
            <person name="Matthews B.B."/>
            <person name="Campbell K.S."/>
            <person name="Hradecky P."/>
            <person name="Huang Y."/>
            <person name="Kaminker J.S."/>
            <person name="Millburn G.H."/>
            <person name="Prochnik S.E."/>
            <person name="Smith C.D."/>
            <person name="Tupy J.L."/>
            <person name="Whitfield E.J."/>
            <person name="Bayraktaroglu L."/>
            <person name="Berman B.P."/>
            <person name="Bettencourt B.R."/>
            <person name="Celniker S.E."/>
            <person name="de Grey A.D.N.J."/>
            <person name="Drysdale R.A."/>
            <person name="Harris N.L."/>
            <person name="Richter J."/>
            <person name="Russo S."/>
            <person name="Schroeder A.J."/>
            <person name="Shu S.Q."/>
            <person name="Stapleton M."/>
            <person name="Yamada C."/>
            <person name="Ashburner M."/>
            <person name="Gelbart W.M."/>
            <person name="Rubin G.M."/>
            <person name="Lewis S.E."/>
        </authorList>
    </citation>
    <scope>GENOME REANNOTATION</scope>
    <source>
        <strain>Berkeley</strain>
    </source>
</reference>
<reference key="3">
    <citation type="submission" date="2002-06" db="EMBL/GenBank/DDBJ databases">
        <authorList>
            <person name="Stapleton M."/>
            <person name="Brokstein P."/>
            <person name="Hong L."/>
            <person name="Agbayani A."/>
            <person name="Carlson J.W."/>
            <person name="Champe M."/>
            <person name="Chavez C."/>
            <person name="Dorsett V."/>
            <person name="Dresnek D."/>
            <person name="Farfan D."/>
            <person name="Frise E."/>
            <person name="George R.A."/>
            <person name="Gonzalez M."/>
            <person name="Guarin H."/>
            <person name="Kronmiller B."/>
            <person name="Li P.W."/>
            <person name="Liao G."/>
            <person name="Miranda A."/>
            <person name="Mungall C.J."/>
            <person name="Nunoo J."/>
            <person name="Pacleb J.M."/>
            <person name="Paragas V."/>
            <person name="Park S."/>
            <person name="Patel S."/>
            <person name="Phouanenavong S."/>
            <person name="Wan K.H."/>
            <person name="Yu C."/>
            <person name="Lewis S.E."/>
            <person name="Rubin G.M."/>
            <person name="Celniker S.E."/>
        </authorList>
    </citation>
    <scope>NUCLEOTIDE SEQUENCE [LARGE SCALE MRNA]</scope>
    <source>
        <strain>Berkeley</strain>
        <tissue>Embryo</tissue>
    </source>
</reference>
<name>CSN9_DROME</name>
<dbReference type="EMBL" id="AE013599">
    <property type="protein sequence ID" value="AAF58405.1"/>
    <property type="status" value="ALT_INIT"/>
    <property type="molecule type" value="Genomic_DNA"/>
</dbReference>
<dbReference type="EMBL" id="AY118736">
    <property type="protein sequence ID" value="AAM50596.1"/>
    <property type="status" value="ALT_INIT"/>
    <property type="molecule type" value="mRNA"/>
</dbReference>
<dbReference type="RefSeq" id="NP_652383.1">
    <property type="nucleotide sequence ID" value="NM_144126.2"/>
</dbReference>
<dbReference type="BioGRID" id="72598">
    <property type="interactions" value="4"/>
</dbReference>
<dbReference type="FunCoup" id="Q7JVR7">
    <property type="interactions" value="171"/>
</dbReference>
<dbReference type="STRING" id="7227.FBpp0086852"/>
<dbReference type="PaxDb" id="7227-FBpp0086852"/>
<dbReference type="DNASU" id="50227"/>
<dbReference type="EnsemblMetazoa" id="FBtr0087739">
    <property type="protein sequence ID" value="FBpp0086852"/>
    <property type="gene ID" value="FBgn0040754"/>
</dbReference>
<dbReference type="GeneID" id="50227"/>
<dbReference type="KEGG" id="dme:Dmel_CG17059"/>
<dbReference type="UCSC" id="CG17059-RA">
    <property type="organism name" value="d. melanogaster"/>
</dbReference>
<dbReference type="AGR" id="FB:FBgn0040754"/>
<dbReference type="FlyBase" id="FBgn0040754">
    <property type="gene designation" value="CG17059"/>
</dbReference>
<dbReference type="VEuPathDB" id="VectorBase:FBgn0040754"/>
<dbReference type="eggNOG" id="ENOG502S7KZ">
    <property type="taxonomic scope" value="Eukaryota"/>
</dbReference>
<dbReference type="GeneTree" id="ENSGT00390000000076"/>
<dbReference type="HOGENOM" id="CLU_191079_0_0_1"/>
<dbReference type="InParanoid" id="Q7JVR7"/>
<dbReference type="OrthoDB" id="9972368at2759"/>
<dbReference type="PhylomeDB" id="Q7JVR7"/>
<dbReference type="BioGRID-ORCS" id="50227">
    <property type="hits" value="0 hits in 1 CRISPR screen"/>
</dbReference>
<dbReference type="GenomeRNAi" id="50227"/>
<dbReference type="PRO" id="PR:Q7JVR7"/>
<dbReference type="Proteomes" id="UP000000803">
    <property type="component" value="Chromosome 2R"/>
</dbReference>
<dbReference type="Bgee" id="FBgn0040754">
    <property type="expression patterns" value="Expressed in adult middle midgut class II enteroendocrine cell in adult midgut (Drosophila) and 153 other cell types or tissues"/>
</dbReference>
<dbReference type="GO" id="GO:0000785">
    <property type="term" value="C:chromatin"/>
    <property type="evidence" value="ECO:0000250"/>
    <property type="project" value="UniProtKB"/>
</dbReference>
<dbReference type="GO" id="GO:0008180">
    <property type="term" value="C:COP9 signalosome"/>
    <property type="evidence" value="ECO:0000250"/>
    <property type="project" value="UniProtKB"/>
</dbReference>
<dbReference type="GO" id="GO:0005737">
    <property type="term" value="C:cytoplasm"/>
    <property type="evidence" value="ECO:0000250"/>
    <property type="project" value="UniProtKB"/>
</dbReference>
<dbReference type="GO" id="GO:0005654">
    <property type="term" value="C:nucleoplasm"/>
    <property type="evidence" value="ECO:0000250"/>
    <property type="project" value="UniProtKB"/>
</dbReference>
<dbReference type="GO" id="GO:0005634">
    <property type="term" value="C:nucleus"/>
    <property type="evidence" value="ECO:0000250"/>
    <property type="project" value="UniProtKB"/>
</dbReference>
<dbReference type="GO" id="GO:0034644">
    <property type="term" value="P:cellular response to UV"/>
    <property type="evidence" value="ECO:0000250"/>
    <property type="project" value="UniProtKB"/>
</dbReference>
<dbReference type="GO" id="GO:0008284">
    <property type="term" value="P:positive regulation of cell population proliferation"/>
    <property type="evidence" value="ECO:0000250"/>
    <property type="project" value="UniProtKB"/>
</dbReference>
<dbReference type="InterPro" id="IPR029391">
    <property type="entry name" value="CSN9_metazoa"/>
</dbReference>
<dbReference type="PANTHER" id="PTHR28562">
    <property type="entry name" value="COP9 SIGNALOSOME COMPLEX SUBUNIT 9"/>
    <property type="match status" value="1"/>
</dbReference>
<dbReference type="Pfam" id="PF15004">
    <property type="entry name" value="MYEOV2"/>
    <property type="match status" value="1"/>
</dbReference>
<gene>
    <name type="ORF">CG17059</name>
</gene>
<proteinExistence type="inferred from homology"/>
<accession>Q7JVR7</accession>
<protein>
    <recommendedName>
        <fullName evidence="3">COP9 signalosome complex subunit 9 homolog</fullName>
    </recommendedName>
</protein>
<sequence length="67" mass="7581">MKPSLAADEMFSEGPGYMEMDESGGATGMMMDHLPSNDKHVHADFYNDFDDLFDEDNWAKMKTDGKQ</sequence>